<comment type="function">
    <text evidence="1">Catalyzes the formation of 5-methyl-uridine at position 54 (m5U54) in tRNA.</text>
</comment>
<comment type="catalytic activity">
    <reaction>
        <text>uridine(54) in tRNA + S-adenosyl-L-methionine = 5-methyluridine(54) in tRNA + S-adenosyl-L-homocysteine + H(+)</text>
        <dbReference type="Rhea" id="RHEA:42712"/>
        <dbReference type="Rhea" id="RHEA-COMP:10167"/>
        <dbReference type="Rhea" id="RHEA-COMP:10193"/>
        <dbReference type="ChEBI" id="CHEBI:15378"/>
        <dbReference type="ChEBI" id="CHEBI:57856"/>
        <dbReference type="ChEBI" id="CHEBI:59789"/>
        <dbReference type="ChEBI" id="CHEBI:65315"/>
        <dbReference type="ChEBI" id="CHEBI:74447"/>
        <dbReference type="EC" id="2.1.1.35"/>
    </reaction>
</comment>
<comment type="similarity">
    <text evidence="2">Belongs to the class I-like SAM-binding methyltransferase superfamily. RNA M5U methyltransferase family.</text>
</comment>
<gene>
    <name type="ordered locus">PF1172</name>
</gene>
<organism>
    <name type="scientific">Pyrococcus furiosus (strain ATCC 43587 / DSM 3638 / JCM 8422 / Vc1)</name>
    <dbReference type="NCBI Taxonomy" id="186497"/>
    <lineage>
        <taxon>Archaea</taxon>
        <taxon>Methanobacteriati</taxon>
        <taxon>Methanobacteriota</taxon>
        <taxon>Thermococci</taxon>
        <taxon>Thermococcales</taxon>
        <taxon>Thermococcaceae</taxon>
        <taxon>Pyrococcus</taxon>
    </lineage>
</organism>
<feature type="chain" id="PRO_0000162056" description="tRNA (uracil(54)-C(5))-methyltransferase">
    <location>
        <begin position="1"/>
        <end position="411"/>
    </location>
</feature>
<feature type="active site" description="Nucleophile" evidence="2">
    <location>
        <position position="369"/>
    </location>
</feature>
<feature type="active site" description="Proton acceptor" evidence="3">
    <location>
        <position position="402"/>
    </location>
</feature>
<feature type="binding site" evidence="1">
    <location>
        <position position="62"/>
    </location>
    <ligand>
        <name>[4Fe-4S] cluster</name>
        <dbReference type="ChEBI" id="CHEBI:49883"/>
    </ligand>
</feature>
<feature type="binding site" evidence="1">
    <location>
        <position position="68"/>
    </location>
    <ligand>
        <name>[4Fe-4S] cluster</name>
        <dbReference type="ChEBI" id="CHEBI:49883"/>
    </ligand>
</feature>
<feature type="binding site" evidence="1">
    <location>
        <position position="71"/>
    </location>
    <ligand>
        <name>[4Fe-4S] cluster</name>
        <dbReference type="ChEBI" id="CHEBI:49883"/>
    </ligand>
</feature>
<feature type="binding site" evidence="1">
    <location>
        <position position="138"/>
    </location>
    <ligand>
        <name>[4Fe-4S] cluster</name>
        <dbReference type="ChEBI" id="CHEBI:49883"/>
    </ligand>
</feature>
<feature type="binding site" evidence="2">
    <location>
        <position position="254"/>
    </location>
    <ligand>
        <name>S-adenosyl-L-methionine</name>
        <dbReference type="ChEBI" id="CHEBI:59789"/>
    </ligand>
</feature>
<feature type="binding site" evidence="2">
    <location>
        <position position="280"/>
    </location>
    <ligand>
        <name>S-adenosyl-L-methionine</name>
        <dbReference type="ChEBI" id="CHEBI:59789"/>
    </ligand>
</feature>
<feature type="binding site" evidence="2">
    <location>
        <position position="285"/>
    </location>
    <ligand>
        <name>S-adenosyl-L-methionine</name>
        <dbReference type="ChEBI" id="CHEBI:59789"/>
    </ligand>
</feature>
<feature type="binding site" evidence="1">
    <location>
        <begin position="301"/>
        <end position="302"/>
    </location>
    <ligand>
        <name>S-adenosyl-L-methionine</name>
        <dbReference type="ChEBI" id="CHEBI:59789"/>
    </ligand>
</feature>
<feature type="binding site" evidence="2">
    <location>
        <position position="328"/>
    </location>
    <ligand>
        <name>S-adenosyl-L-methionine</name>
        <dbReference type="ChEBI" id="CHEBI:59789"/>
    </ligand>
</feature>
<feature type="binding site" evidence="2">
    <location>
        <position position="342"/>
    </location>
    <ligand>
        <name>S-adenosyl-L-methionine</name>
        <dbReference type="ChEBI" id="CHEBI:59789"/>
    </ligand>
</feature>
<evidence type="ECO:0000250" key="1"/>
<evidence type="ECO:0000255" key="2">
    <source>
        <dbReference type="PROSITE-ProRule" id="PRU01024"/>
    </source>
</evidence>
<evidence type="ECO:0000255" key="3">
    <source>
        <dbReference type="PROSITE-ProRule" id="PRU10015"/>
    </source>
</evidence>
<dbReference type="EC" id="2.1.1.35"/>
<dbReference type="EMBL" id="AE009950">
    <property type="protein sequence ID" value="AAL81296.1"/>
    <property type="molecule type" value="Genomic_DNA"/>
</dbReference>
<dbReference type="SMR" id="Q8U1N4"/>
<dbReference type="STRING" id="186497.PF1172"/>
<dbReference type="PaxDb" id="186497-PF1172"/>
<dbReference type="DNASU" id="1469041"/>
<dbReference type="KEGG" id="pfu:PF1172"/>
<dbReference type="PATRIC" id="fig|186497.12.peg.1232"/>
<dbReference type="eggNOG" id="arCOG00122">
    <property type="taxonomic scope" value="Archaea"/>
</dbReference>
<dbReference type="HOGENOM" id="CLU_014689_8_1_2"/>
<dbReference type="OrthoDB" id="85343at2157"/>
<dbReference type="PhylomeDB" id="Q8U1N4"/>
<dbReference type="Proteomes" id="UP000001013">
    <property type="component" value="Chromosome"/>
</dbReference>
<dbReference type="GO" id="GO:0051539">
    <property type="term" value="F:4 iron, 4 sulfur cluster binding"/>
    <property type="evidence" value="ECO:0007669"/>
    <property type="project" value="UniProtKB-KW"/>
</dbReference>
<dbReference type="GO" id="GO:0046872">
    <property type="term" value="F:metal ion binding"/>
    <property type="evidence" value="ECO:0007669"/>
    <property type="project" value="UniProtKB-KW"/>
</dbReference>
<dbReference type="GO" id="GO:0030697">
    <property type="term" value="F:tRNA (uracil(54)-C5)-methyltransferase activity, S-adenosyl methionine-dependent"/>
    <property type="evidence" value="ECO:0000250"/>
    <property type="project" value="UniProtKB"/>
</dbReference>
<dbReference type="GO" id="GO:0030488">
    <property type="term" value="P:tRNA methylation"/>
    <property type="evidence" value="ECO:0000250"/>
    <property type="project" value="UniProtKB"/>
</dbReference>
<dbReference type="CDD" id="cd02440">
    <property type="entry name" value="AdoMet_MTases"/>
    <property type="match status" value="1"/>
</dbReference>
<dbReference type="FunFam" id="2.40.50.1070:FF:000008">
    <property type="entry name" value="23S rRNA (uracil(747)-C(5))-methyltransferase"/>
    <property type="match status" value="1"/>
</dbReference>
<dbReference type="FunFam" id="2.40.50.140:FF:000439">
    <property type="entry name" value="23S rRNA (uracil(747)-C(5))-methyltransferase"/>
    <property type="match status" value="1"/>
</dbReference>
<dbReference type="Gene3D" id="2.40.50.1070">
    <property type="match status" value="1"/>
</dbReference>
<dbReference type="Gene3D" id="2.40.50.140">
    <property type="entry name" value="Nucleic acid-binding proteins"/>
    <property type="match status" value="1"/>
</dbReference>
<dbReference type="Gene3D" id="3.40.50.150">
    <property type="entry name" value="Vaccinia Virus protein VP39"/>
    <property type="match status" value="1"/>
</dbReference>
<dbReference type="InterPro" id="IPR030390">
    <property type="entry name" value="MeTrfase_TrmA_AS"/>
</dbReference>
<dbReference type="InterPro" id="IPR030391">
    <property type="entry name" value="MeTrfase_TrmA_CS"/>
</dbReference>
<dbReference type="InterPro" id="IPR012340">
    <property type="entry name" value="NA-bd_OB-fold"/>
</dbReference>
<dbReference type="InterPro" id="IPR048845">
    <property type="entry name" value="RUMT_ARLMC_TRAM_dom"/>
</dbReference>
<dbReference type="InterPro" id="IPR029063">
    <property type="entry name" value="SAM-dependent_MTases_sf"/>
</dbReference>
<dbReference type="InterPro" id="IPR010280">
    <property type="entry name" value="U5_MeTrfase_fam"/>
</dbReference>
<dbReference type="NCBIfam" id="TIGR00479">
    <property type="entry name" value="rumA"/>
    <property type="match status" value="1"/>
</dbReference>
<dbReference type="PANTHER" id="PTHR11061">
    <property type="entry name" value="RNA M5U METHYLTRANSFERASE"/>
    <property type="match status" value="1"/>
</dbReference>
<dbReference type="PANTHER" id="PTHR11061:SF30">
    <property type="entry name" value="TRNA (URACIL(54)-C(5))-METHYLTRANSFERASE"/>
    <property type="match status" value="1"/>
</dbReference>
<dbReference type="Pfam" id="PF21579">
    <property type="entry name" value="PabTrmU54_TRAM_dom"/>
    <property type="match status" value="1"/>
</dbReference>
<dbReference type="Pfam" id="PF05958">
    <property type="entry name" value="tRNA_U5-meth_tr"/>
    <property type="match status" value="1"/>
</dbReference>
<dbReference type="SUPFAM" id="SSF53335">
    <property type="entry name" value="S-adenosyl-L-methionine-dependent methyltransferases"/>
    <property type="match status" value="1"/>
</dbReference>
<dbReference type="PROSITE" id="PS51687">
    <property type="entry name" value="SAM_MT_RNA_M5U"/>
    <property type="match status" value="1"/>
</dbReference>
<dbReference type="PROSITE" id="PS01230">
    <property type="entry name" value="TRMA_1"/>
    <property type="match status" value="1"/>
</dbReference>
<dbReference type="PROSITE" id="PS01231">
    <property type="entry name" value="TRMA_2"/>
    <property type="match status" value="1"/>
</dbReference>
<accession>Q8U1N4</accession>
<keyword id="KW-0004">4Fe-4S</keyword>
<keyword id="KW-0408">Iron</keyword>
<keyword id="KW-0411">Iron-sulfur</keyword>
<keyword id="KW-0479">Metal-binding</keyword>
<keyword id="KW-0489">Methyltransferase</keyword>
<keyword id="KW-1185">Reference proteome</keyword>
<keyword id="KW-0949">S-adenosyl-L-methionine</keyword>
<keyword id="KW-0808">Transferase</keyword>
<keyword id="KW-0819">tRNA processing</keyword>
<sequence length="411" mass="47128">MRGIIKRLNDDGFGILYNKILVPFSAPGDEVEVLKTEKQKRAKIATEWRLLRSSPIRVGARCKVFGKCGGCILQHINYNSQLEFKKEKLRKILGREVEIIPSPRIFGHRNRIDLAVTVNAIGFREKGKWWSVVDVEECPVFGKTSKKAIERLREYIEEEKVSTWKIREDSGFLRYMVLREGKFTGEIMVNFVTKEGELPDPTSYFDFADSIYWSINRSKSDVSYGDIEKYWGKEFIMEELDGVKYLIHPNSFFQTNSYQAVNLVKTVEKFVEGEKVVDMYSGVGTFGVYLAKKGMKVVGFDSNAFAIEMANKNAEINNVEAEFFVASDREVDIKGFDTVIVDPPRAGLHPKLVKRLNDHGPETIVYVSCNPKTFKVNIEQLNNYIIEELIALDMFPHTPHIELVGKLRRLV</sequence>
<reference key="1">
    <citation type="journal article" date="1999" name="Genetics">
        <title>Divergence of the hyperthermophilic archaea Pyrococcus furiosus and P. horikoshii inferred from complete genomic sequences.</title>
        <authorList>
            <person name="Maeder D.L."/>
            <person name="Weiss R.B."/>
            <person name="Dunn D.M."/>
            <person name="Cherry J.L."/>
            <person name="Gonzalez J.M."/>
            <person name="DiRuggiero J."/>
            <person name="Robb F.T."/>
        </authorList>
    </citation>
    <scope>NUCLEOTIDE SEQUENCE [LARGE SCALE GENOMIC DNA]</scope>
    <source>
        <strain>ATCC 43587 / DSM 3638 / JCM 8422 / Vc1</strain>
    </source>
</reference>
<name>ATRMA_PYRFU</name>
<protein>
    <recommendedName>
        <fullName>tRNA (uracil(54)-C(5))-methyltransferase</fullName>
        <ecNumber>2.1.1.35</ecNumber>
    </recommendedName>
    <alternativeName>
        <fullName>tRNA(m5U54)-methyltransferase</fullName>
        <shortName>RUMT</shortName>
    </alternativeName>
</protein>
<proteinExistence type="inferred from homology"/>